<dbReference type="EC" id="2.7.7.59" evidence="1"/>
<dbReference type="EC" id="3.1.4.-" evidence="1"/>
<dbReference type="EMBL" id="CP000010">
    <property type="protein sequence ID" value="AAU47757.1"/>
    <property type="molecule type" value="Genomic_DNA"/>
</dbReference>
<dbReference type="RefSeq" id="WP_004197089.1">
    <property type="nucleotide sequence ID" value="NC_006348.1"/>
</dbReference>
<dbReference type="RefSeq" id="YP_103197.1">
    <property type="nucleotide sequence ID" value="NC_006348.1"/>
</dbReference>
<dbReference type="SMR" id="Q62JC2"/>
<dbReference type="GeneID" id="92979283"/>
<dbReference type="KEGG" id="bma:BMA1557"/>
<dbReference type="PATRIC" id="fig|243160.12.peg.1603"/>
<dbReference type="eggNOG" id="COG2844">
    <property type="taxonomic scope" value="Bacteria"/>
</dbReference>
<dbReference type="HOGENOM" id="CLU_012833_0_0_4"/>
<dbReference type="Proteomes" id="UP000006693">
    <property type="component" value="Chromosome 1"/>
</dbReference>
<dbReference type="GO" id="GO:0008773">
    <property type="term" value="F:[protein-PII] uridylyltransferase activity"/>
    <property type="evidence" value="ECO:0007669"/>
    <property type="project" value="UniProtKB-UniRule"/>
</dbReference>
<dbReference type="GO" id="GO:0008081">
    <property type="term" value="F:phosphoric diester hydrolase activity"/>
    <property type="evidence" value="ECO:0007669"/>
    <property type="project" value="UniProtKB-UniRule"/>
</dbReference>
<dbReference type="GO" id="GO:0006808">
    <property type="term" value="P:regulation of nitrogen utilization"/>
    <property type="evidence" value="ECO:0007669"/>
    <property type="project" value="UniProtKB-UniRule"/>
</dbReference>
<dbReference type="CDD" id="cd04899">
    <property type="entry name" value="ACT_ACR-UUR-like_2"/>
    <property type="match status" value="1"/>
</dbReference>
<dbReference type="CDD" id="cd04900">
    <property type="entry name" value="ACT_UUR-like_1"/>
    <property type="match status" value="1"/>
</dbReference>
<dbReference type="CDD" id="cd00077">
    <property type="entry name" value="HDc"/>
    <property type="match status" value="1"/>
</dbReference>
<dbReference type="CDD" id="cd05401">
    <property type="entry name" value="NT_GlnE_GlnD_like"/>
    <property type="match status" value="1"/>
</dbReference>
<dbReference type="Gene3D" id="3.30.70.260">
    <property type="match status" value="1"/>
</dbReference>
<dbReference type="Gene3D" id="3.30.460.10">
    <property type="entry name" value="Beta Polymerase, domain 2"/>
    <property type="match status" value="1"/>
</dbReference>
<dbReference type="Gene3D" id="1.10.3210.10">
    <property type="entry name" value="Hypothetical protein af1432"/>
    <property type="match status" value="1"/>
</dbReference>
<dbReference type="Gene3D" id="1.20.120.330">
    <property type="entry name" value="Nucleotidyltransferases domain 2"/>
    <property type="match status" value="1"/>
</dbReference>
<dbReference type="HAMAP" id="MF_00277">
    <property type="entry name" value="PII_uridylyl_transf"/>
    <property type="match status" value="1"/>
</dbReference>
<dbReference type="InterPro" id="IPR045865">
    <property type="entry name" value="ACT-like_dom_sf"/>
</dbReference>
<dbReference type="InterPro" id="IPR002912">
    <property type="entry name" value="ACT_dom"/>
</dbReference>
<dbReference type="InterPro" id="IPR003607">
    <property type="entry name" value="HD/PDEase_dom"/>
</dbReference>
<dbReference type="InterPro" id="IPR006674">
    <property type="entry name" value="HD_domain"/>
</dbReference>
<dbReference type="InterPro" id="IPR043519">
    <property type="entry name" value="NT_sf"/>
</dbReference>
<dbReference type="InterPro" id="IPR013546">
    <property type="entry name" value="PII_UdlTrfase/GS_AdlTrfase"/>
</dbReference>
<dbReference type="InterPro" id="IPR002934">
    <property type="entry name" value="Polymerase_NTP_transf_dom"/>
</dbReference>
<dbReference type="InterPro" id="IPR010043">
    <property type="entry name" value="UTase/UR"/>
</dbReference>
<dbReference type="NCBIfam" id="NF002837">
    <property type="entry name" value="PRK03059.1"/>
    <property type="match status" value="1"/>
</dbReference>
<dbReference type="NCBIfam" id="TIGR01693">
    <property type="entry name" value="UTase_glnD"/>
    <property type="match status" value="1"/>
</dbReference>
<dbReference type="PANTHER" id="PTHR47320">
    <property type="entry name" value="BIFUNCTIONAL URIDYLYLTRANSFERASE/URIDYLYL-REMOVING ENZYME"/>
    <property type="match status" value="1"/>
</dbReference>
<dbReference type="PANTHER" id="PTHR47320:SF1">
    <property type="entry name" value="BIFUNCTIONAL URIDYLYLTRANSFERASE_URIDYLYL-REMOVING ENZYME"/>
    <property type="match status" value="1"/>
</dbReference>
<dbReference type="Pfam" id="PF08335">
    <property type="entry name" value="GlnD_UR_UTase"/>
    <property type="match status" value="1"/>
</dbReference>
<dbReference type="Pfam" id="PF01966">
    <property type="entry name" value="HD"/>
    <property type="match status" value="1"/>
</dbReference>
<dbReference type="Pfam" id="PF01909">
    <property type="entry name" value="NTP_transf_2"/>
    <property type="match status" value="1"/>
</dbReference>
<dbReference type="PIRSF" id="PIRSF006288">
    <property type="entry name" value="PII_uridyltransf"/>
    <property type="match status" value="1"/>
</dbReference>
<dbReference type="SMART" id="SM00471">
    <property type="entry name" value="HDc"/>
    <property type="match status" value="1"/>
</dbReference>
<dbReference type="SUPFAM" id="SSF55021">
    <property type="entry name" value="ACT-like"/>
    <property type="match status" value="2"/>
</dbReference>
<dbReference type="SUPFAM" id="SSF109604">
    <property type="entry name" value="HD-domain/PDEase-like"/>
    <property type="match status" value="1"/>
</dbReference>
<dbReference type="SUPFAM" id="SSF81301">
    <property type="entry name" value="Nucleotidyltransferase"/>
    <property type="match status" value="1"/>
</dbReference>
<dbReference type="SUPFAM" id="SSF81593">
    <property type="entry name" value="Nucleotidyltransferase substrate binding subunit/domain"/>
    <property type="match status" value="1"/>
</dbReference>
<dbReference type="PROSITE" id="PS51671">
    <property type="entry name" value="ACT"/>
    <property type="match status" value="2"/>
</dbReference>
<dbReference type="PROSITE" id="PS51831">
    <property type="entry name" value="HD"/>
    <property type="match status" value="1"/>
</dbReference>
<sequence length="858" mass="96749">MSASVAEPPPALSRKAEFKAAKAELLARFKSANHVTPLMHALSRATDDALRSLWQECGLPATLALVAVGGFGRGELSPHSDVDILVLLPDAHASELDERIERFIGMAWDLGLEIGSSVRTVDQCIEEASHDVTVQTSLLEARRIVGSTALFERFMLRYREALDARAFFQAKVLEMRQRHAKFQNTPYSLEPNVKESPGGLRDLQTILWIARAAGFGSSWRELDTRGLITDREARELRRNEGFLKTLRARLHVIAGRRQDILVFDLQTQAAESFGYQPTSAKRASEQLMRRYYWAAKAVTQLATILIQNIEAQLFPATSGVTRVLSPGRFVEKQGMLEIAADDVFERHPDAILEAFLLYEATRGVKGLSARTLRALYNSRDVMNNAWRRDPRNRHTFMQILQQPEGITHAFRLMNQTSVLGRYLLNFRRIVGQMQHDLYHVYTVDQHILMVLRNIRRFAVAEHAHEYPFCSQLIVNFERPWVLYVAALFHDIAKGRGGDHSALGMADARRFCREHGIEGDDAALVVWLVQHHLTMSQVAQKQDTSDPVVIKRFAELVGSERRLTALYLLTVADIRGTSPKVWNTWKGKLLEDLYRATLAVLGGAQPDAHSELKTRQEEALALLRLETVPPDAHRALWDQLDVGYFLRHDAADIAWQTRVLYRHVAADTAIVRARPSPVGDALQVLVYVKDRSDLFAGICAYFDRNGLSVLDARVNTTRHGYALDNFIVTQTEHDVQYRDIANLVEQQLAARLAESAPLPEPSKGRLSRLSRTFPITPRVDLRADERGQYYILSVSANDRPGLLYSIARVLAEHRVGVHAARINTLGERVEDVFMLDGTGLSDNRLQIQVETELLRAIAV</sequence>
<feature type="chain" id="PRO_0000192725" description="Bifunctional uridylyltransferase/uridylyl-removing enzyme">
    <location>
        <begin position="1"/>
        <end position="858"/>
    </location>
</feature>
<feature type="domain" description="HD" evidence="2">
    <location>
        <begin position="443"/>
        <end position="565"/>
    </location>
</feature>
<feature type="domain" description="ACT 1" evidence="1">
    <location>
        <begin position="682"/>
        <end position="761"/>
    </location>
</feature>
<feature type="domain" description="ACT 2" evidence="1">
    <location>
        <begin position="790"/>
        <end position="858"/>
    </location>
</feature>
<feature type="region of interest" description="Uridylyltransferase">
    <location>
        <begin position="1"/>
        <end position="324"/>
    </location>
</feature>
<feature type="region of interest" description="Uridylyl-removing">
    <location>
        <begin position="325"/>
        <end position="681"/>
    </location>
</feature>
<proteinExistence type="inferred from homology"/>
<comment type="function">
    <text evidence="1">Modifies, by uridylylation and deuridylylation, the PII regulatory proteins (GlnB and homologs), in response to the nitrogen status of the cell that GlnD senses through the glutamine level. Under low glutamine levels, catalyzes the conversion of the PII proteins and UTP to PII-UMP and PPi, while under higher glutamine levels, GlnD hydrolyzes PII-UMP to PII and UMP (deuridylylation). Thus, controls uridylylation state and activity of the PII proteins, and plays an important role in the regulation of nitrogen assimilation and metabolism.</text>
</comment>
<comment type="catalytic activity">
    <reaction evidence="1">
        <text>[protein-PII]-L-tyrosine + UTP = [protein-PII]-uridylyl-L-tyrosine + diphosphate</text>
        <dbReference type="Rhea" id="RHEA:13673"/>
        <dbReference type="Rhea" id="RHEA-COMP:12147"/>
        <dbReference type="Rhea" id="RHEA-COMP:12148"/>
        <dbReference type="ChEBI" id="CHEBI:33019"/>
        <dbReference type="ChEBI" id="CHEBI:46398"/>
        <dbReference type="ChEBI" id="CHEBI:46858"/>
        <dbReference type="ChEBI" id="CHEBI:90602"/>
        <dbReference type="EC" id="2.7.7.59"/>
    </reaction>
</comment>
<comment type="catalytic activity">
    <reaction evidence="1">
        <text>[protein-PII]-uridylyl-L-tyrosine + H2O = [protein-PII]-L-tyrosine + UMP + H(+)</text>
        <dbReference type="Rhea" id="RHEA:48600"/>
        <dbReference type="Rhea" id="RHEA-COMP:12147"/>
        <dbReference type="Rhea" id="RHEA-COMP:12148"/>
        <dbReference type="ChEBI" id="CHEBI:15377"/>
        <dbReference type="ChEBI" id="CHEBI:15378"/>
        <dbReference type="ChEBI" id="CHEBI:46858"/>
        <dbReference type="ChEBI" id="CHEBI:57865"/>
        <dbReference type="ChEBI" id="CHEBI:90602"/>
    </reaction>
</comment>
<comment type="cofactor">
    <cofactor evidence="1">
        <name>Mg(2+)</name>
        <dbReference type="ChEBI" id="CHEBI:18420"/>
    </cofactor>
</comment>
<comment type="activity regulation">
    <text evidence="1">Uridylyltransferase (UTase) activity is inhibited by glutamine, while glutamine activates uridylyl-removing (UR) activity.</text>
</comment>
<comment type="domain">
    <text evidence="1">Has four distinct domains: an N-terminal nucleotidyltransferase (NT) domain responsible for UTase activity, a central HD domain that encodes UR activity, and two C-terminal ACT domains that seem to have a role in glutamine sensing.</text>
</comment>
<comment type="similarity">
    <text evidence="1">Belongs to the GlnD family.</text>
</comment>
<evidence type="ECO:0000255" key="1">
    <source>
        <dbReference type="HAMAP-Rule" id="MF_00277"/>
    </source>
</evidence>
<evidence type="ECO:0000255" key="2">
    <source>
        <dbReference type="PROSITE-ProRule" id="PRU01175"/>
    </source>
</evidence>
<keyword id="KW-0378">Hydrolase</keyword>
<keyword id="KW-0460">Magnesium</keyword>
<keyword id="KW-0511">Multifunctional enzyme</keyword>
<keyword id="KW-0548">Nucleotidyltransferase</keyword>
<keyword id="KW-1185">Reference proteome</keyword>
<keyword id="KW-0677">Repeat</keyword>
<keyword id="KW-0808">Transferase</keyword>
<gene>
    <name evidence="1" type="primary">glnD</name>
    <name type="ordered locus">BMA1557</name>
</gene>
<organism>
    <name type="scientific">Burkholderia mallei (strain ATCC 23344)</name>
    <dbReference type="NCBI Taxonomy" id="243160"/>
    <lineage>
        <taxon>Bacteria</taxon>
        <taxon>Pseudomonadati</taxon>
        <taxon>Pseudomonadota</taxon>
        <taxon>Betaproteobacteria</taxon>
        <taxon>Burkholderiales</taxon>
        <taxon>Burkholderiaceae</taxon>
        <taxon>Burkholderia</taxon>
        <taxon>pseudomallei group</taxon>
    </lineage>
</organism>
<protein>
    <recommendedName>
        <fullName evidence="1">Bifunctional uridylyltransferase/uridylyl-removing enzyme</fullName>
        <shortName evidence="1">UTase/UR</shortName>
    </recommendedName>
    <alternativeName>
        <fullName evidence="1">Bifunctional [protein-PII] modification enzyme</fullName>
    </alternativeName>
    <alternativeName>
        <fullName evidence="1">Bifunctional nitrogen sensor protein</fullName>
    </alternativeName>
    <domain>
        <recommendedName>
            <fullName evidence="1">[Protein-PII] uridylyltransferase</fullName>
            <shortName evidence="1">PII uridylyltransferase</shortName>
            <shortName evidence="1">UTase</shortName>
            <ecNumber evidence="1">2.7.7.59</ecNumber>
        </recommendedName>
    </domain>
    <domain>
        <recommendedName>
            <fullName evidence="1">[Protein-PII]-UMP uridylyl-removing enzyme</fullName>
            <shortName evidence="1">UR</shortName>
            <ecNumber evidence="1">3.1.4.-</ecNumber>
        </recommendedName>
    </domain>
</protein>
<accession>Q62JC2</accession>
<reference key="1">
    <citation type="journal article" date="2004" name="Proc. Natl. Acad. Sci. U.S.A.">
        <title>Structural flexibility in the Burkholderia mallei genome.</title>
        <authorList>
            <person name="Nierman W.C."/>
            <person name="DeShazer D."/>
            <person name="Kim H.S."/>
            <person name="Tettelin H."/>
            <person name="Nelson K.E."/>
            <person name="Feldblyum T.V."/>
            <person name="Ulrich R.L."/>
            <person name="Ronning C.M."/>
            <person name="Brinkac L.M."/>
            <person name="Daugherty S.C."/>
            <person name="Davidsen T.D."/>
            <person name="DeBoy R.T."/>
            <person name="Dimitrov G."/>
            <person name="Dodson R.J."/>
            <person name="Durkin A.S."/>
            <person name="Gwinn M.L."/>
            <person name="Haft D.H."/>
            <person name="Khouri H.M."/>
            <person name="Kolonay J.F."/>
            <person name="Madupu R."/>
            <person name="Mohammoud Y."/>
            <person name="Nelson W.C."/>
            <person name="Radune D."/>
            <person name="Romero C.M."/>
            <person name="Sarria S."/>
            <person name="Selengut J."/>
            <person name="Shamblin C."/>
            <person name="Sullivan S.A."/>
            <person name="White O."/>
            <person name="Yu Y."/>
            <person name="Zafar N."/>
            <person name="Zhou L."/>
            <person name="Fraser C.M."/>
        </authorList>
    </citation>
    <scope>NUCLEOTIDE SEQUENCE [LARGE SCALE GENOMIC DNA]</scope>
    <source>
        <strain>ATCC 23344</strain>
    </source>
</reference>
<name>GLND_BURMA</name>